<proteinExistence type="inferred from homology"/>
<protein>
    <recommendedName>
        <fullName evidence="1">Dihydroxy-acid dehydratase</fullName>
        <shortName evidence="1">DAD</shortName>
        <ecNumber evidence="1">4.2.1.9</ecNumber>
    </recommendedName>
</protein>
<organism>
    <name type="scientific">Buchnera aphidicola subsp. Diuraphis noxia</name>
    <dbReference type="NCBI Taxonomy" id="118101"/>
    <lineage>
        <taxon>Bacteria</taxon>
        <taxon>Pseudomonadati</taxon>
        <taxon>Pseudomonadota</taxon>
        <taxon>Gammaproteobacteria</taxon>
        <taxon>Enterobacterales</taxon>
        <taxon>Erwiniaceae</taxon>
        <taxon>Buchnera</taxon>
    </lineage>
</organism>
<comment type="function">
    <text evidence="1">Functions in the biosynthesis of branched-chain amino acids. Catalyzes the dehydration of (2R,3R)-2,3-dihydroxy-3-methylpentanoate (2,3-dihydroxy-3-methylvalerate) into 2-oxo-3-methylpentanoate (2-oxo-3-methylvalerate) and of (2R)-2,3-dihydroxy-3-methylbutanoate (2,3-dihydroxyisovalerate) into 2-oxo-3-methylbutanoate (2-oxoisovalerate), the penultimate precursor to L-isoleucine and L-valine, respectively.</text>
</comment>
<comment type="catalytic activity">
    <reaction evidence="1">
        <text>(2R)-2,3-dihydroxy-3-methylbutanoate = 3-methyl-2-oxobutanoate + H2O</text>
        <dbReference type="Rhea" id="RHEA:24809"/>
        <dbReference type="ChEBI" id="CHEBI:11851"/>
        <dbReference type="ChEBI" id="CHEBI:15377"/>
        <dbReference type="ChEBI" id="CHEBI:49072"/>
        <dbReference type="EC" id="4.2.1.9"/>
    </reaction>
    <physiologicalReaction direction="left-to-right" evidence="1">
        <dbReference type="Rhea" id="RHEA:24810"/>
    </physiologicalReaction>
</comment>
<comment type="catalytic activity">
    <reaction evidence="1">
        <text>(2R,3R)-2,3-dihydroxy-3-methylpentanoate = (S)-3-methyl-2-oxopentanoate + H2O</text>
        <dbReference type="Rhea" id="RHEA:27694"/>
        <dbReference type="ChEBI" id="CHEBI:15377"/>
        <dbReference type="ChEBI" id="CHEBI:35146"/>
        <dbReference type="ChEBI" id="CHEBI:49258"/>
        <dbReference type="EC" id="4.2.1.9"/>
    </reaction>
    <physiologicalReaction direction="left-to-right" evidence="1">
        <dbReference type="Rhea" id="RHEA:27695"/>
    </physiologicalReaction>
</comment>
<comment type="cofactor">
    <cofactor evidence="1">
        <name>[2Fe-2S] cluster</name>
        <dbReference type="ChEBI" id="CHEBI:190135"/>
    </cofactor>
    <text evidence="1">Binds 1 [2Fe-2S] cluster per subunit. This cluster acts as a Lewis acid cofactor.</text>
</comment>
<comment type="cofactor">
    <cofactor evidence="1">
        <name>Mg(2+)</name>
        <dbReference type="ChEBI" id="CHEBI:18420"/>
    </cofactor>
</comment>
<comment type="pathway">
    <text evidence="1">Amino-acid biosynthesis; L-isoleucine biosynthesis; L-isoleucine from 2-oxobutanoate: step 3/4.</text>
</comment>
<comment type="pathway">
    <text evidence="1">Amino-acid biosynthesis; L-valine biosynthesis; L-valine from pyruvate: step 3/4.</text>
</comment>
<comment type="subunit">
    <text evidence="1">Homodimer.</text>
</comment>
<comment type="similarity">
    <text evidence="1">Belongs to the IlvD/Edd family.</text>
</comment>
<reference key="1">
    <citation type="journal article" date="1999" name="Mol. Biol. Evol.">
        <title>Sequence evolution in bacterial endosymbionts having extreme base compositions.</title>
        <authorList>
            <person name="Clark M.A."/>
            <person name="Moran N.A."/>
            <person name="Baumann P."/>
        </authorList>
    </citation>
    <scope>NUCLEOTIDE SEQUENCE [GENOMIC DNA]</scope>
</reference>
<name>ILVD_BUCDN</name>
<sequence>MPKYRSFKTTHGKNMSGARSLWRATGMNDEDFKKPIIAIVNSFSQFVPGHIHLKKVGELISDQIQKSGGVPKEFNTIAIDDGIAMGHSGMLYSLPSRELIADSIEYVINAHCVDAMICVSNCDKITPGMLMAALRLNIPSVFISGGPMEAGKIRKNEKEIKIDLVDAIMIGGQSNQCKNFIKEVELLACPTCGSCSGMFTANSMNCLTEAIGLSLPGNGTLLATHVDRKNLFIKSAKTIVKITKEYYHHNNKKVLPRSIASKESFENAMILDIAMGGSTNTILHLLAAAQEAEIDFNMSNIDELSRKIPHICKVSPSTSLYHMEDVHRAGGVMGILGELNRANLLNKQTQNILQLNLEETLKEYDIVLSKNPDILKMFKAKPAGIRTIQPYSQENRWLTLDYDRKTGCIRSCKNAYSQDGGLAVLYGNLAKNGCIIKTAGIKKSNYIFSGPARVYESQEEAVNAILKGEIISGDIVVIRYEGPKGGPGMQEMLYPTTYLKSMKLDKTCALITDGRFSGGTSGLSIGHVSPEAANKGVIALVKNGDIINIDITQRVINLNITEQELQQRIFQEESKKSLSYKPLNRKRHISYALKTYAFFAMSADKGAVRDRQKLSKI</sequence>
<feature type="chain" id="PRO_0000103449" description="Dihydroxy-acid dehydratase">
    <location>
        <begin position="1"/>
        <end position="617"/>
    </location>
</feature>
<feature type="active site" description="Proton acceptor" evidence="1">
    <location>
        <position position="517"/>
    </location>
</feature>
<feature type="binding site" evidence="1">
    <location>
        <position position="81"/>
    </location>
    <ligand>
        <name>Mg(2+)</name>
        <dbReference type="ChEBI" id="CHEBI:18420"/>
    </ligand>
</feature>
<feature type="binding site" evidence="1">
    <location>
        <position position="122"/>
    </location>
    <ligand>
        <name>[2Fe-2S] cluster</name>
        <dbReference type="ChEBI" id="CHEBI:190135"/>
    </ligand>
</feature>
<feature type="binding site" evidence="1">
    <location>
        <position position="123"/>
    </location>
    <ligand>
        <name>Mg(2+)</name>
        <dbReference type="ChEBI" id="CHEBI:18420"/>
    </ligand>
</feature>
<feature type="binding site" description="via carbamate group" evidence="1">
    <location>
        <position position="124"/>
    </location>
    <ligand>
        <name>Mg(2+)</name>
        <dbReference type="ChEBI" id="CHEBI:18420"/>
    </ligand>
</feature>
<feature type="binding site" evidence="1">
    <location>
        <position position="195"/>
    </location>
    <ligand>
        <name>[2Fe-2S] cluster</name>
        <dbReference type="ChEBI" id="CHEBI:190135"/>
    </ligand>
</feature>
<feature type="binding site" evidence="1">
    <location>
        <position position="491"/>
    </location>
    <ligand>
        <name>Mg(2+)</name>
        <dbReference type="ChEBI" id="CHEBI:18420"/>
    </ligand>
</feature>
<feature type="modified residue" description="N6-carboxylysine" evidence="1">
    <location>
        <position position="124"/>
    </location>
</feature>
<dbReference type="EC" id="4.2.1.9" evidence="1"/>
<dbReference type="EMBL" id="AF130812">
    <property type="protein sequence ID" value="AAF13798.1"/>
    <property type="molecule type" value="Genomic_DNA"/>
</dbReference>
<dbReference type="RefSeq" id="WP_075433591.1">
    <property type="nucleotide sequence ID" value="NZ_CP013259.1"/>
</dbReference>
<dbReference type="SMR" id="Q9RQ56"/>
<dbReference type="STRING" id="118101.ATN01_02990"/>
<dbReference type="OrthoDB" id="9807077at2"/>
<dbReference type="UniPathway" id="UPA00047">
    <property type="reaction ID" value="UER00057"/>
</dbReference>
<dbReference type="UniPathway" id="UPA00049">
    <property type="reaction ID" value="UER00061"/>
</dbReference>
<dbReference type="GO" id="GO:0005829">
    <property type="term" value="C:cytosol"/>
    <property type="evidence" value="ECO:0007669"/>
    <property type="project" value="TreeGrafter"/>
</dbReference>
<dbReference type="GO" id="GO:0051537">
    <property type="term" value="F:2 iron, 2 sulfur cluster binding"/>
    <property type="evidence" value="ECO:0007669"/>
    <property type="project" value="UniProtKB-UniRule"/>
</dbReference>
<dbReference type="GO" id="GO:0004160">
    <property type="term" value="F:dihydroxy-acid dehydratase activity"/>
    <property type="evidence" value="ECO:0007669"/>
    <property type="project" value="UniProtKB-UniRule"/>
</dbReference>
<dbReference type="GO" id="GO:0000287">
    <property type="term" value="F:magnesium ion binding"/>
    <property type="evidence" value="ECO:0007669"/>
    <property type="project" value="UniProtKB-UniRule"/>
</dbReference>
<dbReference type="GO" id="GO:0009097">
    <property type="term" value="P:isoleucine biosynthetic process"/>
    <property type="evidence" value="ECO:0007669"/>
    <property type="project" value="UniProtKB-UniRule"/>
</dbReference>
<dbReference type="GO" id="GO:0009099">
    <property type="term" value="P:L-valine biosynthetic process"/>
    <property type="evidence" value="ECO:0007669"/>
    <property type="project" value="UniProtKB-UniRule"/>
</dbReference>
<dbReference type="FunFam" id="3.50.30.80:FF:000001">
    <property type="entry name" value="Dihydroxy-acid dehydratase"/>
    <property type="match status" value="1"/>
</dbReference>
<dbReference type="Gene3D" id="3.50.30.80">
    <property type="entry name" value="IlvD/EDD C-terminal domain-like"/>
    <property type="match status" value="1"/>
</dbReference>
<dbReference type="HAMAP" id="MF_00012">
    <property type="entry name" value="IlvD"/>
    <property type="match status" value="1"/>
</dbReference>
<dbReference type="InterPro" id="IPR042096">
    <property type="entry name" value="Dihydro-acid_dehy_C"/>
</dbReference>
<dbReference type="InterPro" id="IPR004404">
    <property type="entry name" value="DihydroxyA_deHydtase"/>
</dbReference>
<dbReference type="InterPro" id="IPR020558">
    <property type="entry name" value="DiOHA_6PGluconate_deHydtase_CS"/>
</dbReference>
<dbReference type="InterPro" id="IPR056740">
    <property type="entry name" value="ILV_EDD_C"/>
</dbReference>
<dbReference type="InterPro" id="IPR000581">
    <property type="entry name" value="ILV_EDD_N"/>
</dbReference>
<dbReference type="InterPro" id="IPR037237">
    <property type="entry name" value="IlvD/EDD_N"/>
</dbReference>
<dbReference type="NCBIfam" id="TIGR00110">
    <property type="entry name" value="ilvD"/>
    <property type="match status" value="1"/>
</dbReference>
<dbReference type="NCBIfam" id="NF009103">
    <property type="entry name" value="PRK12448.1"/>
    <property type="match status" value="1"/>
</dbReference>
<dbReference type="PANTHER" id="PTHR43661">
    <property type="entry name" value="D-XYLONATE DEHYDRATASE"/>
    <property type="match status" value="1"/>
</dbReference>
<dbReference type="PANTHER" id="PTHR43661:SF3">
    <property type="entry name" value="D-XYLONATE DEHYDRATASE YAGF-RELATED"/>
    <property type="match status" value="1"/>
</dbReference>
<dbReference type="Pfam" id="PF24877">
    <property type="entry name" value="ILV_EDD_C"/>
    <property type="match status" value="1"/>
</dbReference>
<dbReference type="Pfam" id="PF00920">
    <property type="entry name" value="ILVD_EDD_N"/>
    <property type="match status" value="1"/>
</dbReference>
<dbReference type="SUPFAM" id="SSF143975">
    <property type="entry name" value="IlvD/EDD N-terminal domain-like"/>
    <property type="match status" value="1"/>
</dbReference>
<dbReference type="SUPFAM" id="SSF52016">
    <property type="entry name" value="LeuD/IlvD-like"/>
    <property type="match status" value="1"/>
</dbReference>
<dbReference type="PROSITE" id="PS00886">
    <property type="entry name" value="ILVD_EDD_1"/>
    <property type="match status" value="1"/>
</dbReference>
<dbReference type="PROSITE" id="PS00887">
    <property type="entry name" value="ILVD_EDD_2"/>
    <property type="match status" value="1"/>
</dbReference>
<evidence type="ECO:0000255" key="1">
    <source>
        <dbReference type="HAMAP-Rule" id="MF_00012"/>
    </source>
</evidence>
<gene>
    <name evidence="1" type="primary">ilvD</name>
</gene>
<keyword id="KW-0001">2Fe-2S</keyword>
<keyword id="KW-0028">Amino-acid biosynthesis</keyword>
<keyword id="KW-0100">Branched-chain amino acid biosynthesis</keyword>
<keyword id="KW-0408">Iron</keyword>
<keyword id="KW-0411">Iron-sulfur</keyword>
<keyword id="KW-0456">Lyase</keyword>
<keyword id="KW-0460">Magnesium</keyword>
<keyword id="KW-0479">Metal-binding</keyword>
<accession>Q9RQ56</accession>